<feature type="chain" id="PRO_0000412967" description="Probable Sec-independent protein translocase protein TatE">
    <location>
        <begin position="1"/>
        <end position="67"/>
    </location>
</feature>
<feature type="transmembrane region" description="Helical" evidence="1">
    <location>
        <begin position="1"/>
        <end position="21"/>
    </location>
</feature>
<feature type="region of interest" description="Disordered" evidence="2">
    <location>
        <begin position="43"/>
        <end position="67"/>
    </location>
</feature>
<feature type="compositionally biased region" description="Basic and acidic residues" evidence="2">
    <location>
        <begin position="54"/>
        <end position="67"/>
    </location>
</feature>
<dbReference type="EMBL" id="CU468135">
    <property type="protein sequence ID" value="CAO97406.1"/>
    <property type="molecule type" value="Genomic_DNA"/>
</dbReference>
<dbReference type="RefSeq" id="WP_012442075.1">
    <property type="nucleotide sequence ID" value="NC_010694.1"/>
</dbReference>
<dbReference type="SMR" id="B2VBK2"/>
<dbReference type="STRING" id="465817.ETA_23600"/>
<dbReference type="KEGG" id="eta:ETA_23600"/>
<dbReference type="eggNOG" id="COG1826">
    <property type="taxonomic scope" value="Bacteria"/>
</dbReference>
<dbReference type="HOGENOM" id="CLU_086034_5_3_6"/>
<dbReference type="OrthoDB" id="7066617at2"/>
<dbReference type="Proteomes" id="UP000001726">
    <property type="component" value="Chromosome"/>
</dbReference>
<dbReference type="GO" id="GO:0033281">
    <property type="term" value="C:TAT protein transport complex"/>
    <property type="evidence" value="ECO:0007669"/>
    <property type="project" value="UniProtKB-UniRule"/>
</dbReference>
<dbReference type="GO" id="GO:0008320">
    <property type="term" value="F:protein transmembrane transporter activity"/>
    <property type="evidence" value="ECO:0007669"/>
    <property type="project" value="UniProtKB-UniRule"/>
</dbReference>
<dbReference type="GO" id="GO:0043953">
    <property type="term" value="P:protein transport by the Tat complex"/>
    <property type="evidence" value="ECO:0007669"/>
    <property type="project" value="UniProtKB-UniRule"/>
</dbReference>
<dbReference type="Gene3D" id="1.20.5.3310">
    <property type="match status" value="1"/>
</dbReference>
<dbReference type="HAMAP" id="MF_00236">
    <property type="entry name" value="TatA_E"/>
    <property type="match status" value="1"/>
</dbReference>
<dbReference type="HAMAP" id="MF_00903">
    <property type="entry name" value="TatE"/>
    <property type="match status" value="1"/>
</dbReference>
<dbReference type="InterPro" id="IPR003369">
    <property type="entry name" value="TatA/B/E"/>
</dbReference>
<dbReference type="InterPro" id="IPR006312">
    <property type="entry name" value="TatA/E"/>
</dbReference>
<dbReference type="InterPro" id="IPR024905">
    <property type="entry name" value="TatE"/>
</dbReference>
<dbReference type="NCBIfam" id="NF002448">
    <property type="entry name" value="PRK01614.1"/>
    <property type="match status" value="1"/>
</dbReference>
<dbReference type="NCBIfam" id="NF002960">
    <property type="entry name" value="PRK03625.1"/>
    <property type="match status" value="1"/>
</dbReference>
<dbReference type="NCBIfam" id="TIGR01411">
    <property type="entry name" value="tatAE"/>
    <property type="match status" value="1"/>
</dbReference>
<dbReference type="PANTHER" id="PTHR42982">
    <property type="entry name" value="SEC-INDEPENDENT PROTEIN TRANSLOCASE PROTEIN TATA"/>
    <property type="match status" value="1"/>
</dbReference>
<dbReference type="PANTHER" id="PTHR42982:SF5">
    <property type="entry name" value="SEC-INDEPENDENT PROTEIN TRANSLOCASE PROTEIN TATE"/>
    <property type="match status" value="1"/>
</dbReference>
<dbReference type="Pfam" id="PF02416">
    <property type="entry name" value="TatA_B_E"/>
    <property type="match status" value="1"/>
</dbReference>
<accession>B2VBK2</accession>
<comment type="function">
    <text evidence="1">Part of the twin-arginine translocation (Tat) system that transports large folded proteins containing a characteristic twin-arginine motif in their signal peptide across membranes. TatE shares overlapping functions with TatA.</text>
</comment>
<comment type="subcellular location">
    <subcellularLocation>
        <location evidence="1">Cell inner membrane</location>
        <topology evidence="1">Single-pass membrane protein</topology>
    </subcellularLocation>
</comment>
<comment type="similarity">
    <text evidence="1">Belongs to the TatA/E family. TatE subfamily.</text>
</comment>
<gene>
    <name evidence="1" type="primary">tatE</name>
    <name type="ordered locus">ETA_23600</name>
</gene>
<keyword id="KW-0997">Cell inner membrane</keyword>
<keyword id="KW-1003">Cell membrane</keyword>
<keyword id="KW-0472">Membrane</keyword>
<keyword id="KW-0653">Protein transport</keyword>
<keyword id="KW-1185">Reference proteome</keyword>
<keyword id="KW-0811">Translocation</keyword>
<keyword id="KW-0812">Transmembrane</keyword>
<keyword id="KW-1133">Transmembrane helix</keyword>
<keyword id="KW-0813">Transport</keyword>
<evidence type="ECO:0000255" key="1">
    <source>
        <dbReference type="HAMAP-Rule" id="MF_00903"/>
    </source>
</evidence>
<evidence type="ECO:0000256" key="2">
    <source>
        <dbReference type="SAM" id="MobiDB-lite"/>
    </source>
</evidence>
<reference key="1">
    <citation type="journal article" date="2008" name="Environ. Microbiol.">
        <title>The genome of Erwinia tasmaniensis strain Et1/99, a non-pathogenic bacterium in the genus Erwinia.</title>
        <authorList>
            <person name="Kube M."/>
            <person name="Migdoll A.M."/>
            <person name="Mueller I."/>
            <person name="Kuhl H."/>
            <person name="Beck A."/>
            <person name="Reinhardt R."/>
            <person name="Geider K."/>
        </authorList>
    </citation>
    <scope>NUCLEOTIDE SEQUENCE [LARGE SCALE GENOMIC DNA]</scope>
    <source>
        <strain>DSM 17950 / CFBP 7177 / CIP 109463 / NCPPB 4357 / Et1/99</strain>
    </source>
</reference>
<organism>
    <name type="scientific">Erwinia tasmaniensis (strain DSM 17950 / CFBP 7177 / CIP 109463 / NCPPB 4357 / Et1/99)</name>
    <dbReference type="NCBI Taxonomy" id="465817"/>
    <lineage>
        <taxon>Bacteria</taxon>
        <taxon>Pseudomonadati</taxon>
        <taxon>Pseudomonadota</taxon>
        <taxon>Gammaproteobacteria</taxon>
        <taxon>Enterobacterales</taxon>
        <taxon>Erwiniaceae</taxon>
        <taxon>Erwinia</taxon>
    </lineage>
</organism>
<name>TATE_ERWT9</name>
<sequence>MEGISLAKLLIVGALIVLLFGTKKLRSLGGDLGSAIKGFKKAMNDDSDATSKTASEDKNAGQAVHKE</sequence>
<protein>
    <recommendedName>
        <fullName evidence="1">Probable Sec-independent protein translocase protein TatE</fullName>
    </recommendedName>
</protein>
<proteinExistence type="inferred from homology"/>